<comment type="function">
    <text evidence="1">The M ring may be actively involved in energy transduction.</text>
</comment>
<comment type="subunit">
    <text evidence="1">The basal body constitutes a major portion of the flagellar organelle and consists of four rings (L,P,S, and M) mounted on a central rod. The M ring is integral to the inner membrane of the cell and may be connected to the flagellar rod via the S ring. The S (supramembrane ring) lies just distal to the M ring. The L and P rings lie in the outer membrane and the periplasmic space, respectively (By similarity).</text>
</comment>
<comment type="subcellular location">
    <subcellularLocation>
        <location evidence="1">Cell inner membrane</location>
        <topology evidence="1">Multi-pass membrane protein</topology>
    </subcellularLocation>
    <subcellularLocation>
        <location evidence="1">Bacterial flagellum basal body</location>
    </subcellularLocation>
</comment>
<comment type="similarity">
    <text evidence="4">Belongs to the FliF family.</text>
</comment>
<evidence type="ECO:0000250" key="1"/>
<evidence type="ECO:0000255" key="2"/>
<evidence type="ECO:0000256" key="3">
    <source>
        <dbReference type="SAM" id="MobiDB-lite"/>
    </source>
</evidence>
<evidence type="ECO:0000305" key="4"/>
<reference key="1">
    <citation type="submission" date="1996-07" db="EMBL/GenBank/DDBJ databases">
        <authorList>
            <person name="Goodfellow I.G."/>
            <person name="Woolley K.J."/>
            <person name="Sockett R.E.S."/>
        </authorList>
    </citation>
    <scope>NUCLEOTIDE SEQUENCE [GENOMIC DNA]</scope>
    <source>
        <strain>WS8</strain>
    </source>
</reference>
<name>FLIF_CERSP</name>
<keyword id="KW-0975">Bacterial flagellum</keyword>
<keyword id="KW-0997">Cell inner membrane</keyword>
<keyword id="KW-1003">Cell membrane</keyword>
<keyword id="KW-0472">Membrane</keyword>
<keyword id="KW-0812">Transmembrane</keyword>
<keyword id="KW-1133">Transmembrane helix</keyword>
<protein>
    <recommendedName>
        <fullName>Flagellar M-ring protein</fullName>
    </recommendedName>
</protein>
<gene>
    <name type="primary">fliF</name>
</gene>
<dbReference type="EMBL" id="X98692">
    <property type="protein sequence ID" value="CAA67251.1"/>
    <property type="molecule type" value="Genomic_DNA"/>
</dbReference>
<dbReference type="SMR" id="Q53151"/>
<dbReference type="GO" id="GO:0009431">
    <property type="term" value="C:bacterial-type flagellum basal body, MS ring"/>
    <property type="evidence" value="ECO:0007669"/>
    <property type="project" value="InterPro"/>
</dbReference>
<dbReference type="GO" id="GO:0005886">
    <property type="term" value="C:plasma membrane"/>
    <property type="evidence" value="ECO:0007669"/>
    <property type="project" value="UniProtKB-SubCell"/>
</dbReference>
<dbReference type="GO" id="GO:0003774">
    <property type="term" value="F:cytoskeletal motor activity"/>
    <property type="evidence" value="ECO:0007669"/>
    <property type="project" value="InterPro"/>
</dbReference>
<dbReference type="GO" id="GO:0071973">
    <property type="term" value="P:bacterial-type flagellum-dependent cell motility"/>
    <property type="evidence" value="ECO:0007669"/>
    <property type="project" value="InterPro"/>
</dbReference>
<dbReference type="Gene3D" id="3.30.300.30">
    <property type="match status" value="1"/>
</dbReference>
<dbReference type="InterPro" id="IPR045851">
    <property type="entry name" value="AMP-bd_C_sf"/>
</dbReference>
<dbReference type="InterPro" id="IPR013556">
    <property type="entry name" value="Flag_M-ring_C"/>
</dbReference>
<dbReference type="InterPro" id="IPR000067">
    <property type="entry name" value="FlgMring_FliF"/>
</dbReference>
<dbReference type="InterPro" id="IPR006182">
    <property type="entry name" value="FliF_N_dom"/>
</dbReference>
<dbReference type="InterPro" id="IPR043427">
    <property type="entry name" value="YscJ/FliF"/>
</dbReference>
<dbReference type="NCBIfam" id="TIGR00206">
    <property type="entry name" value="fliF"/>
    <property type="match status" value="1"/>
</dbReference>
<dbReference type="PANTHER" id="PTHR30046">
    <property type="entry name" value="FLAGELLAR M-RING PROTEIN"/>
    <property type="match status" value="1"/>
</dbReference>
<dbReference type="PANTHER" id="PTHR30046:SF0">
    <property type="entry name" value="FLAGELLAR M-RING PROTEIN"/>
    <property type="match status" value="1"/>
</dbReference>
<dbReference type="Pfam" id="PF01514">
    <property type="entry name" value="YscJ_FliF"/>
    <property type="match status" value="1"/>
</dbReference>
<dbReference type="Pfam" id="PF08345">
    <property type="entry name" value="YscJ_FliF_C"/>
    <property type="match status" value="1"/>
</dbReference>
<dbReference type="PIRSF" id="PIRSF004862">
    <property type="entry name" value="FliF"/>
    <property type="match status" value="1"/>
</dbReference>
<dbReference type="PRINTS" id="PR01009">
    <property type="entry name" value="FLGMRINGFLIF"/>
</dbReference>
<proteinExistence type="inferred from homology"/>
<accession>Q53151</accession>
<feature type="chain" id="PRO_0000180886" description="Flagellar M-ring protein">
    <location>
        <begin position="1"/>
        <end position="570"/>
    </location>
</feature>
<feature type="transmembrane region" description="Helical" evidence="2">
    <location>
        <begin position="40"/>
        <end position="60"/>
    </location>
</feature>
<feature type="transmembrane region" description="Helical" evidence="2">
    <location>
        <begin position="463"/>
        <end position="483"/>
    </location>
</feature>
<feature type="region of interest" description="Disordered" evidence="3">
    <location>
        <begin position="312"/>
        <end position="365"/>
    </location>
</feature>
<feature type="compositionally biased region" description="Low complexity" evidence="3">
    <location>
        <begin position="334"/>
        <end position="351"/>
    </location>
</feature>
<feature type="compositionally biased region" description="Polar residues" evidence="3">
    <location>
        <begin position="354"/>
        <end position="363"/>
    </location>
</feature>
<organism>
    <name type="scientific">Cereibacter sphaeroides</name>
    <name type="common">Rhodobacter sphaeroides</name>
    <dbReference type="NCBI Taxonomy" id="1063"/>
    <lineage>
        <taxon>Bacteria</taxon>
        <taxon>Pseudomonadati</taxon>
        <taxon>Pseudomonadota</taxon>
        <taxon>Alphaproteobacteria</taxon>
        <taxon>Rhodobacterales</taxon>
        <taxon>Paracoccaceae</taxon>
        <taxon>Cereibacter</taxon>
    </lineage>
</organism>
<sequence length="570" mass="60676">MAPSPTPPAVRRPASALIPQMRGMLDQIRRFGDQPGLRRAMPAILILAVTVLALAGWILLREPARVTLYPGLPEAEKARVIDSLTGGGIAAVIDERTGEVAVPGAEYHRARMLLAAQGLPQGLPDGNALLSDLPMGTSKSVETARLRQAQELDLARSITEISAVSAARVHLALPERSAFLRESQPPRASVFLQIVPGRTLDGAQVEAIVNLVSSSVPGMARQDVTVVDQMGRLLSRGSDDPAVLLNDRQLQHRVQLETLYRNRIESLLTPIAGPGNLAVQVTIDMDFTRQEIREEQVDPDRTALLAEQSQIEETADPQARGIPGAVSNSPPPEAALEAGAPPTAAGEAAAPMRSRSQNSTRNFEVSRKVETTLPATARIARVSAAVVVRAQPQPAATDPAAPPPPLLPEALKADLERLTRSAVGFDADRGDVVTITAQPFLDTVVPEASGWSAEPWVADLARQGFLLAALAVVALGVVRPILNRVLLPAPAAAGALPLGETAVEVGEGESLDDVRARLKARQGALTKNMLDAARSHEEQILVIRKLVEEDEGRIATTIRQMIAAELDTVK</sequence>